<dbReference type="EC" id="6.3.2.2" evidence="1"/>
<dbReference type="EMBL" id="CP000850">
    <property type="protein sequence ID" value="ABV98564.1"/>
    <property type="molecule type" value="Genomic_DNA"/>
</dbReference>
<dbReference type="SMR" id="A8M5J6"/>
<dbReference type="STRING" id="391037.Sare_2729"/>
<dbReference type="KEGG" id="saq:Sare_2729"/>
<dbReference type="PATRIC" id="fig|391037.6.peg.2766"/>
<dbReference type="eggNOG" id="COG2170">
    <property type="taxonomic scope" value="Bacteria"/>
</dbReference>
<dbReference type="HOGENOM" id="CLU_044848_0_0_11"/>
<dbReference type="OrthoDB" id="9803842at2"/>
<dbReference type="GO" id="GO:0005524">
    <property type="term" value="F:ATP binding"/>
    <property type="evidence" value="ECO:0007669"/>
    <property type="project" value="UniProtKB-KW"/>
</dbReference>
<dbReference type="GO" id="GO:0004357">
    <property type="term" value="F:glutamate-cysteine ligase activity"/>
    <property type="evidence" value="ECO:0007669"/>
    <property type="project" value="UniProtKB-EC"/>
</dbReference>
<dbReference type="GO" id="GO:0042398">
    <property type="term" value="P:modified amino acid biosynthetic process"/>
    <property type="evidence" value="ECO:0007669"/>
    <property type="project" value="InterPro"/>
</dbReference>
<dbReference type="Gene3D" id="3.30.590.20">
    <property type="match status" value="1"/>
</dbReference>
<dbReference type="HAMAP" id="MF_01609">
    <property type="entry name" value="Glu_cys_ligase_2"/>
    <property type="match status" value="1"/>
</dbReference>
<dbReference type="InterPro" id="IPR050141">
    <property type="entry name" value="GCL_type2/YbdK_subfam"/>
</dbReference>
<dbReference type="InterPro" id="IPR006336">
    <property type="entry name" value="GCS2"/>
</dbReference>
<dbReference type="InterPro" id="IPR014746">
    <property type="entry name" value="Gln_synth/guanido_kin_cat_dom"/>
</dbReference>
<dbReference type="InterPro" id="IPR011793">
    <property type="entry name" value="YbdK"/>
</dbReference>
<dbReference type="NCBIfam" id="TIGR02050">
    <property type="entry name" value="gshA_cyan_rel"/>
    <property type="match status" value="1"/>
</dbReference>
<dbReference type="NCBIfam" id="NF010041">
    <property type="entry name" value="PRK13517.1-1"/>
    <property type="match status" value="1"/>
</dbReference>
<dbReference type="PANTHER" id="PTHR36510">
    <property type="entry name" value="GLUTAMATE--CYSTEINE LIGASE 2-RELATED"/>
    <property type="match status" value="1"/>
</dbReference>
<dbReference type="PANTHER" id="PTHR36510:SF1">
    <property type="entry name" value="GLUTAMATE--CYSTEINE LIGASE 2-RELATED"/>
    <property type="match status" value="1"/>
</dbReference>
<dbReference type="Pfam" id="PF04107">
    <property type="entry name" value="GCS2"/>
    <property type="match status" value="1"/>
</dbReference>
<dbReference type="SUPFAM" id="SSF55931">
    <property type="entry name" value="Glutamine synthetase/guanido kinase"/>
    <property type="match status" value="1"/>
</dbReference>
<organism>
    <name type="scientific">Salinispora arenicola (strain CNS-205)</name>
    <dbReference type="NCBI Taxonomy" id="391037"/>
    <lineage>
        <taxon>Bacteria</taxon>
        <taxon>Bacillati</taxon>
        <taxon>Actinomycetota</taxon>
        <taxon>Actinomycetes</taxon>
        <taxon>Micromonosporales</taxon>
        <taxon>Micromonosporaceae</taxon>
        <taxon>Salinispora</taxon>
    </lineage>
</organism>
<protein>
    <recommendedName>
        <fullName evidence="1">Putative glutamate--cysteine ligase 2</fullName>
        <ecNumber evidence="1">6.3.2.2</ecNumber>
    </recommendedName>
    <alternativeName>
        <fullName evidence="1">Gamma-glutamylcysteine synthetase 2</fullName>
        <shortName evidence="1">GCS 2</shortName>
        <shortName evidence="1">Gamma-GCS 2</shortName>
    </alternativeName>
</protein>
<sequence>MTYRPATDGPDLASLTLGVEEEFLLLDAETGESMPVAARVLDGLSGVAHAQSRREFRHSMVEMVTPVLSDLAELRRHLVALRTAAADAAEAAGARLVAVGATPVNETHRTVPDEPRYHAMSRRFGPVAHDPAVCGCHVHVGLPDRELAVQVCNHLRPWLPVVQAITANSPLHDGQDTGHASWRAMQLERWPSIGPTPYFDSAADYDATVADLIKAGIMLDAGMVYWYVRPSAAYPTVEIRVGDVCPTVDDTVLVAGLVRALVATVAADVHDGARAPRIRGCLLSAAHWRAAHDGLDGDLVDLRTGRARPAWDLVDDLFALVTPALERQGDRAYVRDQLARVRAEGTGAVRQRRILDRSACDVRAVLDHLAAQTRPAPV</sequence>
<proteinExistence type="inferred from homology"/>
<evidence type="ECO:0000255" key="1">
    <source>
        <dbReference type="HAMAP-Rule" id="MF_01609"/>
    </source>
</evidence>
<feature type="chain" id="PRO_0000337703" description="Putative glutamate--cysteine ligase 2">
    <location>
        <begin position="1"/>
        <end position="378"/>
    </location>
</feature>
<reference key="1">
    <citation type="submission" date="2007-10" db="EMBL/GenBank/DDBJ databases">
        <title>Complete sequence of Salinispora arenicola CNS-205.</title>
        <authorList>
            <consortium name="US DOE Joint Genome Institute"/>
            <person name="Copeland A."/>
            <person name="Lucas S."/>
            <person name="Lapidus A."/>
            <person name="Barry K."/>
            <person name="Glavina del Rio T."/>
            <person name="Dalin E."/>
            <person name="Tice H."/>
            <person name="Pitluck S."/>
            <person name="Foster B."/>
            <person name="Schmutz J."/>
            <person name="Larimer F."/>
            <person name="Land M."/>
            <person name="Hauser L."/>
            <person name="Kyrpides N."/>
            <person name="Ivanova N."/>
            <person name="Jensen P.R."/>
            <person name="Moore B.S."/>
            <person name="Penn K."/>
            <person name="Jenkins C."/>
            <person name="Udwary D."/>
            <person name="Xiang L."/>
            <person name="Gontang E."/>
            <person name="Richardson P."/>
        </authorList>
    </citation>
    <scope>NUCLEOTIDE SEQUENCE [LARGE SCALE GENOMIC DNA]</scope>
    <source>
        <strain>CNS-205</strain>
    </source>
</reference>
<comment type="function">
    <text evidence="1">ATP-dependent carboxylate-amine ligase which exhibits weak glutamate--cysteine ligase activity.</text>
</comment>
<comment type="catalytic activity">
    <reaction evidence="1">
        <text>L-cysteine + L-glutamate + ATP = gamma-L-glutamyl-L-cysteine + ADP + phosphate + H(+)</text>
        <dbReference type="Rhea" id="RHEA:13285"/>
        <dbReference type="ChEBI" id="CHEBI:15378"/>
        <dbReference type="ChEBI" id="CHEBI:29985"/>
        <dbReference type="ChEBI" id="CHEBI:30616"/>
        <dbReference type="ChEBI" id="CHEBI:35235"/>
        <dbReference type="ChEBI" id="CHEBI:43474"/>
        <dbReference type="ChEBI" id="CHEBI:58173"/>
        <dbReference type="ChEBI" id="CHEBI:456216"/>
        <dbReference type="EC" id="6.3.2.2"/>
    </reaction>
</comment>
<comment type="similarity">
    <text evidence="1">Belongs to the glutamate--cysteine ligase type 2 family. YbdK subfamily.</text>
</comment>
<keyword id="KW-0067">ATP-binding</keyword>
<keyword id="KW-0436">Ligase</keyword>
<keyword id="KW-0547">Nucleotide-binding</keyword>
<accession>A8M5J6</accession>
<name>GCS2_SALAI</name>
<gene>
    <name type="ordered locus">Sare_2729</name>
</gene>